<gene>
    <name type="primary">gefN</name>
    <name type="synonym">rasGEFN</name>
    <name type="ORF">DDB_G0275703</name>
</gene>
<dbReference type="EMBL" id="AY160103">
    <property type="protein sequence ID" value="AAN46883.1"/>
    <property type="molecule type" value="Genomic_DNA"/>
</dbReference>
<dbReference type="EMBL" id="AAFI02000013">
    <property type="protein sequence ID" value="EAL69602.1"/>
    <property type="molecule type" value="Genomic_DNA"/>
</dbReference>
<dbReference type="RefSeq" id="XP_643499.1">
    <property type="nucleotide sequence ID" value="XM_638407.1"/>
</dbReference>
<dbReference type="SMR" id="Q8IS12"/>
<dbReference type="FunCoup" id="Q8IS12">
    <property type="interactions" value="704"/>
</dbReference>
<dbReference type="STRING" id="44689.Q8IS12"/>
<dbReference type="PaxDb" id="44689-DDB0191325"/>
<dbReference type="EnsemblProtists" id="EAL69602">
    <property type="protein sequence ID" value="EAL69602"/>
    <property type="gene ID" value="DDB_G0275703"/>
</dbReference>
<dbReference type="GeneID" id="8620080"/>
<dbReference type="KEGG" id="ddi:DDB_G0275703"/>
<dbReference type="dictyBase" id="DDB_G0275703">
    <property type="gene designation" value="gefN"/>
</dbReference>
<dbReference type="VEuPathDB" id="AmoebaDB:DDB_G0275703"/>
<dbReference type="eggNOG" id="KOG3417">
    <property type="taxonomic scope" value="Eukaryota"/>
</dbReference>
<dbReference type="HOGENOM" id="CLU_278158_0_0_1"/>
<dbReference type="InParanoid" id="Q8IS12"/>
<dbReference type="OMA" id="NIALNCW"/>
<dbReference type="Reactome" id="R-DDI-193648">
    <property type="pathway name" value="NRAGE signals death through JNK"/>
</dbReference>
<dbReference type="Reactome" id="R-DDI-9013148">
    <property type="pathway name" value="CDC42 GTPase cycle"/>
</dbReference>
<dbReference type="Reactome" id="R-DDI-9013149">
    <property type="pathway name" value="RAC1 GTPase cycle"/>
</dbReference>
<dbReference type="PRO" id="PR:Q8IS12"/>
<dbReference type="Proteomes" id="UP000002195">
    <property type="component" value="Chromosome 2"/>
</dbReference>
<dbReference type="GO" id="GO:0005886">
    <property type="term" value="C:plasma membrane"/>
    <property type="evidence" value="ECO:0000318"/>
    <property type="project" value="GO_Central"/>
</dbReference>
<dbReference type="GO" id="GO:0005085">
    <property type="term" value="F:guanyl-nucleotide exchange factor activity"/>
    <property type="evidence" value="ECO:0000318"/>
    <property type="project" value="GO_Central"/>
</dbReference>
<dbReference type="GO" id="GO:0007265">
    <property type="term" value="P:Ras protein signal transduction"/>
    <property type="evidence" value="ECO:0000318"/>
    <property type="project" value="GO_Central"/>
</dbReference>
<dbReference type="GO" id="GO:1903013">
    <property type="term" value="P:response to differentiation-inducing factor 1"/>
    <property type="evidence" value="ECO:0007005"/>
    <property type="project" value="dictyBase"/>
</dbReference>
<dbReference type="CDD" id="cd06224">
    <property type="entry name" value="REM"/>
    <property type="match status" value="1"/>
</dbReference>
<dbReference type="FunFam" id="1.10.840.10:FF:000038">
    <property type="entry name" value="Ras guanine nucleotide exchange factor N"/>
    <property type="match status" value="1"/>
</dbReference>
<dbReference type="Gene3D" id="1.10.840.10">
    <property type="entry name" value="Ras guanine-nucleotide exchange factors catalytic domain"/>
    <property type="match status" value="1"/>
</dbReference>
<dbReference type="Gene3D" id="3.80.10.10">
    <property type="entry name" value="Ribonuclease Inhibitor"/>
    <property type="match status" value="1"/>
</dbReference>
<dbReference type="Gene3D" id="1.20.870.10">
    <property type="entry name" value="Son of sevenless (SoS) protein Chain: S domain 1"/>
    <property type="match status" value="1"/>
</dbReference>
<dbReference type="InterPro" id="IPR001611">
    <property type="entry name" value="Leu-rich_rpt"/>
</dbReference>
<dbReference type="InterPro" id="IPR032675">
    <property type="entry name" value="LRR_dom_sf"/>
</dbReference>
<dbReference type="InterPro" id="IPR008937">
    <property type="entry name" value="Ras-like_GEF"/>
</dbReference>
<dbReference type="InterPro" id="IPR000651">
    <property type="entry name" value="Ras-like_Gua-exchang_fac_N"/>
</dbReference>
<dbReference type="InterPro" id="IPR023578">
    <property type="entry name" value="Ras_GEF_dom_sf"/>
</dbReference>
<dbReference type="InterPro" id="IPR001895">
    <property type="entry name" value="RASGEF_cat_dom"/>
</dbReference>
<dbReference type="InterPro" id="IPR036964">
    <property type="entry name" value="RASGEF_cat_dom_sf"/>
</dbReference>
<dbReference type="PANTHER" id="PTHR23113">
    <property type="entry name" value="GUANINE NUCLEOTIDE EXCHANGE FACTOR"/>
    <property type="match status" value="1"/>
</dbReference>
<dbReference type="PANTHER" id="PTHR23113:SF158">
    <property type="entry name" value="RAS GUANINE NUCLEOTIDE EXCHANGE FACTOR N"/>
    <property type="match status" value="1"/>
</dbReference>
<dbReference type="Pfam" id="PF00617">
    <property type="entry name" value="RasGEF"/>
    <property type="match status" value="1"/>
</dbReference>
<dbReference type="SMART" id="SM00147">
    <property type="entry name" value="RasGEF"/>
    <property type="match status" value="1"/>
</dbReference>
<dbReference type="SUPFAM" id="SSF52075">
    <property type="entry name" value="Outer arm dynein light chain 1"/>
    <property type="match status" value="1"/>
</dbReference>
<dbReference type="SUPFAM" id="SSF48366">
    <property type="entry name" value="Ras GEF"/>
    <property type="match status" value="1"/>
</dbReference>
<dbReference type="PROSITE" id="PS51450">
    <property type="entry name" value="LRR"/>
    <property type="match status" value="2"/>
</dbReference>
<dbReference type="PROSITE" id="PS50009">
    <property type="entry name" value="RASGEF_CAT"/>
    <property type="match status" value="1"/>
</dbReference>
<dbReference type="PROSITE" id="PS50212">
    <property type="entry name" value="RASGEF_NTER"/>
    <property type="match status" value="1"/>
</dbReference>
<name>GEFN_DICDI</name>
<proteinExistence type="evidence at transcript level"/>
<keyword id="KW-0344">Guanine-nucleotide releasing factor</keyword>
<keyword id="KW-0433">Leucine-rich repeat</keyword>
<keyword id="KW-1185">Reference proteome</keyword>
<keyword id="KW-0677">Repeat</keyword>
<sequence>MSYNSLTTIDIDITQLLHLKSVNLRSNKLGNSSGVSYFGSMDTLQKLNLKENYLTELPSTFYLLKLSSLKLDTFTPLYQQQQQQQNQLQRPIINSQSTSNESLIHEINRSFENLSMSEPVSPRIAALKNEKKGPPKPLPKTKGLHSSSSNINTSNNITPILMSPIHDGNKKSPSIISNNNNNNNSNSNIITSNGTVIPQLVFKNEPTGGRLRSFTLDADHISPGRELVSTGSSDEILYFNSEGGCENSDSDEPIQPLSAGRSRAQTISGKQPSIINNNNNNNSGGGSGNNNNSGGGGGSRKAFQNLIKSAKQIGSNIKNKTHHINGHSSSSQSNSTTNTPSISSTPYPTSTIKTNVSDTNTPVNYNGQQQISKVIQRVSGEIDPLYSGIDSPRTLERRNSSRDDIPISPPQGCMTPIKRLGSVEGDEISAIFSSSTDANMDVSQDYSSSTPTVNSMSYQSSFLDTFDNQSTVGSPTFYQLPVSSQPPQHPPPPPPIKDNNQPKLNQSQNLINTNSNSVTTTNNSSQTTTTTTTTTTNNNNVLNLEKLHKLDFAEDINGDERCSNPLYSKKKLAGLLFPNKHHQPSALKTAKIRFKSSKRLATTVNSNSSNNLMMSNSPLSSSSMNLLQQSNSPQYSGTPTSGSFQNQSVLSATLMSSPSMSDVFSGGNSQGGGSSLSQSGSITPVAPLSAVQGSPIGNSGSVNNIYLEGDDFIRDLMQSPIINQEIEFTSEDGVPKVKNITLKMLTSLLTHEKGQSNELNGIFFDTYLLFTSIPLVIEHLESRFLNGKNHIVKQKVITFSQKWVEVCWSDFKEEHIELLLKFLNDCSEQIEKLVTGSFALRTSLNLLLNIINMKRDGTYITEEEETFEQPAPIPDFIQLPNCVDINLMDLRPHEIARQLTILDHELLTQITKQQMLDYAVHQTNSPSIVKVTDRFNYLVLWVSTEIVLSLTIEKRIETIFKFVNIALNCWYLKNFNSAIAIIAAMSKPSIEKLKQTWGFIRNTKANAPIQELKELILPTNVARLRKIMDSVEAPFIPYLGAYFSHSIAIHAGNKSIVNEQYINMQKYDMMGKIIRSITVAQEKKYNLTPVGVLQKFLTDSFVLTEKQLYSEASKIEEKGDSYITETTKFGSIFKKKDK</sequence>
<protein>
    <recommendedName>
        <fullName>Ras guanine nucleotide exchange factor N</fullName>
    </recommendedName>
    <alternativeName>
        <fullName>RasGEF domain-containing protein N</fullName>
    </alternativeName>
</protein>
<evidence type="ECO:0000250" key="1"/>
<evidence type="ECO:0000255" key="2">
    <source>
        <dbReference type="PROSITE-ProRule" id="PRU00135"/>
    </source>
</evidence>
<evidence type="ECO:0000255" key="3">
    <source>
        <dbReference type="PROSITE-ProRule" id="PRU00168"/>
    </source>
</evidence>
<evidence type="ECO:0000256" key="4">
    <source>
        <dbReference type="SAM" id="MobiDB-lite"/>
    </source>
</evidence>
<evidence type="ECO:0000269" key="5">
    <source>
    </source>
</evidence>
<evidence type="ECO:0000269" key="6">
    <source>
    </source>
</evidence>
<organism>
    <name type="scientific">Dictyostelium discoideum</name>
    <name type="common">Social amoeba</name>
    <dbReference type="NCBI Taxonomy" id="44689"/>
    <lineage>
        <taxon>Eukaryota</taxon>
        <taxon>Amoebozoa</taxon>
        <taxon>Evosea</taxon>
        <taxon>Eumycetozoa</taxon>
        <taxon>Dictyostelia</taxon>
        <taxon>Dictyosteliales</taxon>
        <taxon>Dictyosteliaceae</taxon>
        <taxon>Dictyostelium</taxon>
    </lineage>
</organism>
<comment type="function">
    <text evidence="1 6">Promotes the exchange of Ras-bound GDP by GTP (By similarity). May play a role in chemotaxis.</text>
</comment>
<comment type="developmental stage">
    <text evidence="5">Expressed during development; with a peak at 12 hours.</text>
</comment>
<reference key="1">
    <citation type="journal article" date="2005" name="Genome Biol.">
        <title>The Dictyostelium genome encodes numerous RasGEFs with multiple biological roles.</title>
        <authorList>
            <person name="Wilkins A."/>
            <person name="Szafranski K."/>
            <person name="Fraser D.J."/>
            <person name="Bakthavatsalam D."/>
            <person name="Mueller R."/>
            <person name="Fisher P.R."/>
            <person name="Gloeckner G."/>
            <person name="Eichinger L."/>
            <person name="Noegel A.A."/>
            <person name="Insall R.H."/>
        </authorList>
    </citation>
    <scope>NUCLEOTIDE SEQUENCE [GENOMIC DNA]</scope>
    <scope>DEVELOPMENTAL STAGE</scope>
    <source>
        <strain>AX4</strain>
    </source>
</reference>
<reference key="2">
    <citation type="journal article" date="2002" name="Nature">
        <title>Sequence and analysis of chromosome 2 of Dictyostelium discoideum.</title>
        <authorList>
            <person name="Gloeckner G."/>
            <person name="Eichinger L."/>
            <person name="Szafranski K."/>
            <person name="Pachebat J.A."/>
            <person name="Bankier A.T."/>
            <person name="Dear P.H."/>
            <person name="Lehmann R."/>
            <person name="Baumgart C."/>
            <person name="Parra G."/>
            <person name="Abril J.F."/>
            <person name="Guigo R."/>
            <person name="Kumpf K."/>
            <person name="Tunggal B."/>
            <person name="Cox E.C."/>
            <person name="Quail M.A."/>
            <person name="Platzer M."/>
            <person name="Rosenthal A."/>
            <person name="Noegel A.A."/>
        </authorList>
    </citation>
    <scope>NUCLEOTIDE SEQUENCE [LARGE SCALE GENOMIC DNA]</scope>
    <source>
        <strain>AX4</strain>
    </source>
</reference>
<reference key="3">
    <citation type="journal article" date="2005" name="Nature">
        <title>The genome of the social amoeba Dictyostelium discoideum.</title>
        <authorList>
            <person name="Eichinger L."/>
            <person name="Pachebat J.A."/>
            <person name="Gloeckner G."/>
            <person name="Rajandream M.A."/>
            <person name="Sucgang R."/>
            <person name="Berriman M."/>
            <person name="Song J."/>
            <person name="Olsen R."/>
            <person name="Szafranski K."/>
            <person name="Xu Q."/>
            <person name="Tunggal B."/>
            <person name="Kummerfeld S."/>
            <person name="Madera M."/>
            <person name="Konfortov B.A."/>
            <person name="Rivero F."/>
            <person name="Bankier A.T."/>
            <person name="Lehmann R."/>
            <person name="Hamlin N."/>
            <person name="Davies R."/>
            <person name="Gaudet P."/>
            <person name="Fey P."/>
            <person name="Pilcher K."/>
            <person name="Chen G."/>
            <person name="Saunders D."/>
            <person name="Sodergren E.J."/>
            <person name="Davis P."/>
            <person name="Kerhornou A."/>
            <person name="Nie X."/>
            <person name="Hall N."/>
            <person name="Anjard C."/>
            <person name="Hemphill L."/>
            <person name="Bason N."/>
            <person name="Farbrother P."/>
            <person name="Desany B."/>
            <person name="Just E."/>
            <person name="Morio T."/>
            <person name="Rost R."/>
            <person name="Churcher C.M."/>
            <person name="Cooper J."/>
            <person name="Haydock S."/>
            <person name="van Driessche N."/>
            <person name="Cronin A."/>
            <person name="Goodhead I."/>
            <person name="Muzny D.M."/>
            <person name="Mourier T."/>
            <person name="Pain A."/>
            <person name="Lu M."/>
            <person name="Harper D."/>
            <person name="Lindsay R."/>
            <person name="Hauser H."/>
            <person name="James K.D."/>
            <person name="Quiles M."/>
            <person name="Madan Babu M."/>
            <person name="Saito T."/>
            <person name="Buchrieser C."/>
            <person name="Wardroper A."/>
            <person name="Felder M."/>
            <person name="Thangavelu M."/>
            <person name="Johnson D."/>
            <person name="Knights A."/>
            <person name="Loulseged H."/>
            <person name="Mungall K.L."/>
            <person name="Oliver K."/>
            <person name="Price C."/>
            <person name="Quail M.A."/>
            <person name="Urushihara H."/>
            <person name="Hernandez J."/>
            <person name="Rabbinowitsch E."/>
            <person name="Steffen D."/>
            <person name="Sanders M."/>
            <person name="Ma J."/>
            <person name="Kohara Y."/>
            <person name="Sharp S."/>
            <person name="Simmonds M.N."/>
            <person name="Spiegler S."/>
            <person name="Tivey A."/>
            <person name="Sugano S."/>
            <person name="White B."/>
            <person name="Walker D."/>
            <person name="Woodward J.R."/>
            <person name="Winckler T."/>
            <person name="Tanaka Y."/>
            <person name="Shaulsky G."/>
            <person name="Schleicher M."/>
            <person name="Weinstock G.M."/>
            <person name="Rosenthal A."/>
            <person name="Cox E.C."/>
            <person name="Chisholm R.L."/>
            <person name="Gibbs R.A."/>
            <person name="Loomis W.F."/>
            <person name="Platzer M."/>
            <person name="Kay R.R."/>
            <person name="Williams J.G."/>
            <person name="Dear P.H."/>
            <person name="Noegel A.A."/>
            <person name="Barrell B.G."/>
            <person name="Kuspa A."/>
        </authorList>
    </citation>
    <scope>NUCLEOTIDE SEQUENCE [LARGE SCALE GENOMIC DNA]</scope>
    <source>
        <strain>AX4</strain>
    </source>
</reference>
<reference key="4">
    <citation type="journal article" date="2005" name="Bioinformatics">
        <title>Microarray phenotyping in Dictyostelium reveals a regulon of chemotaxis genes.</title>
        <authorList>
            <person name="Booth E.O."/>
            <person name="Van Driessche N."/>
            <person name="Zhuchenko O."/>
            <person name="Kuspa A."/>
            <person name="Shaulsky G."/>
        </authorList>
    </citation>
    <scope>FUNCTION</scope>
</reference>
<feature type="chain" id="PRO_0000384472" description="Ras guanine nucleotide exchange factor N">
    <location>
        <begin position="1"/>
        <end position="1138"/>
    </location>
</feature>
<feature type="repeat" description="LRR 1">
    <location>
        <begin position="1"/>
        <end position="16"/>
    </location>
</feature>
<feature type="repeat" description="LRR 2">
    <location>
        <begin position="18"/>
        <end position="39"/>
    </location>
</feature>
<feature type="repeat" description="LRR 3">
    <location>
        <begin position="43"/>
        <end position="64"/>
    </location>
</feature>
<feature type="domain" description="N-terminal Ras-GEF" evidence="2">
    <location>
        <begin position="733"/>
        <end position="855"/>
    </location>
</feature>
<feature type="domain" description="Ras-GEF" evidence="3">
    <location>
        <begin position="891"/>
        <end position="1118"/>
    </location>
</feature>
<feature type="region of interest" description="Disordered" evidence="4">
    <location>
        <begin position="126"/>
        <end position="180"/>
    </location>
</feature>
<feature type="region of interest" description="Disordered" evidence="4">
    <location>
        <begin position="239"/>
        <end position="301"/>
    </location>
</feature>
<feature type="region of interest" description="Disordered" evidence="4">
    <location>
        <begin position="319"/>
        <end position="360"/>
    </location>
</feature>
<feature type="region of interest" description="Disordered" evidence="4">
    <location>
        <begin position="389"/>
        <end position="411"/>
    </location>
</feature>
<feature type="region of interest" description="Disordered" evidence="4">
    <location>
        <begin position="473"/>
        <end position="540"/>
    </location>
</feature>
<feature type="region of interest" description="Disordered" evidence="4">
    <location>
        <begin position="601"/>
        <end position="643"/>
    </location>
</feature>
<feature type="region of interest" description="Disordered" evidence="4">
    <location>
        <begin position="660"/>
        <end position="680"/>
    </location>
</feature>
<feature type="compositionally biased region" description="Low complexity" evidence="4">
    <location>
        <begin position="140"/>
        <end position="158"/>
    </location>
</feature>
<feature type="compositionally biased region" description="Polar residues" evidence="4">
    <location>
        <begin position="263"/>
        <end position="275"/>
    </location>
</feature>
<feature type="compositionally biased region" description="Gly residues" evidence="4">
    <location>
        <begin position="283"/>
        <end position="299"/>
    </location>
</feature>
<feature type="compositionally biased region" description="Low complexity" evidence="4">
    <location>
        <begin position="326"/>
        <end position="352"/>
    </location>
</feature>
<feature type="compositionally biased region" description="Basic and acidic residues" evidence="4">
    <location>
        <begin position="393"/>
        <end position="405"/>
    </location>
</feature>
<feature type="compositionally biased region" description="Pro residues" evidence="4">
    <location>
        <begin position="487"/>
        <end position="496"/>
    </location>
</feature>
<feature type="compositionally biased region" description="Polar residues" evidence="4">
    <location>
        <begin position="498"/>
        <end position="511"/>
    </location>
</feature>
<feature type="compositionally biased region" description="Low complexity" evidence="4">
    <location>
        <begin position="512"/>
        <end position="540"/>
    </location>
</feature>
<feature type="compositionally biased region" description="Low complexity" evidence="4">
    <location>
        <begin position="605"/>
        <end position="634"/>
    </location>
</feature>
<accession>Q8IS12</accession>
<accession>Q553C1</accession>
<accession>Q869N0</accession>